<protein>
    <recommendedName>
        <fullName evidence="3">Flavonol synthase 1</fullName>
        <shortName evidence="3">CcFLS1</shortName>
        <ecNumber evidence="2">1.14.20.6</ecNumber>
    </recommendedName>
</protein>
<dbReference type="EC" id="1.14.20.6" evidence="2"/>
<dbReference type="EMBL" id="MK562524">
    <property type="protein sequence ID" value="QCF41219.1"/>
    <property type="molecule type" value="mRNA"/>
</dbReference>
<dbReference type="SMR" id="A0A4D6Q440"/>
<dbReference type="GO" id="GO:0045431">
    <property type="term" value="F:flavonol synthase activity"/>
    <property type="evidence" value="ECO:0007669"/>
    <property type="project" value="UniProtKB-EC"/>
</dbReference>
<dbReference type="GO" id="GO:0031418">
    <property type="term" value="F:L-ascorbic acid binding"/>
    <property type="evidence" value="ECO:0007669"/>
    <property type="project" value="UniProtKB-KW"/>
</dbReference>
<dbReference type="GO" id="GO:0046872">
    <property type="term" value="F:metal ion binding"/>
    <property type="evidence" value="ECO:0007669"/>
    <property type="project" value="UniProtKB-KW"/>
</dbReference>
<dbReference type="FunFam" id="2.60.120.330:FF:000009">
    <property type="entry name" value="Flavonol synthase"/>
    <property type="match status" value="1"/>
</dbReference>
<dbReference type="Gene3D" id="2.60.120.330">
    <property type="entry name" value="B-lactam Antibiotic, Isopenicillin N Synthase, Chain"/>
    <property type="match status" value="1"/>
</dbReference>
<dbReference type="InterPro" id="IPR026992">
    <property type="entry name" value="DIOX_N"/>
</dbReference>
<dbReference type="InterPro" id="IPR044861">
    <property type="entry name" value="IPNS-like_FE2OG_OXY"/>
</dbReference>
<dbReference type="InterPro" id="IPR027443">
    <property type="entry name" value="IPNS-like_sf"/>
</dbReference>
<dbReference type="InterPro" id="IPR005123">
    <property type="entry name" value="Oxoglu/Fe-dep_dioxygenase_dom"/>
</dbReference>
<dbReference type="InterPro" id="IPR050295">
    <property type="entry name" value="Plant_2OG-oxidoreductases"/>
</dbReference>
<dbReference type="PANTHER" id="PTHR47991">
    <property type="entry name" value="OXOGLUTARATE/IRON-DEPENDENT DIOXYGENASE"/>
    <property type="match status" value="1"/>
</dbReference>
<dbReference type="Pfam" id="PF03171">
    <property type="entry name" value="2OG-FeII_Oxy"/>
    <property type="match status" value="1"/>
</dbReference>
<dbReference type="Pfam" id="PF14226">
    <property type="entry name" value="DIOX_N"/>
    <property type="match status" value="1"/>
</dbReference>
<dbReference type="SUPFAM" id="SSF51197">
    <property type="entry name" value="Clavaminate synthase-like"/>
    <property type="match status" value="1"/>
</dbReference>
<dbReference type="PROSITE" id="PS51471">
    <property type="entry name" value="FE2OG_OXY"/>
    <property type="match status" value="1"/>
</dbReference>
<keyword id="KW-0223">Dioxygenase</keyword>
<keyword id="KW-0284">Flavonoid biosynthesis</keyword>
<keyword id="KW-0408">Iron</keyword>
<keyword id="KW-0479">Metal-binding</keyword>
<keyword id="KW-0560">Oxidoreductase</keyword>
<keyword id="KW-0847">Vitamin C</keyword>
<reference key="1">
    <citation type="journal article" date="2019" name="Plant Physiol.">
        <title>Flavonol biosynthesis genes and their use in engineering the plant antidiabetic metabolite montbretin A.</title>
        <authorList>
            <person name="Irmisch S."/>
            <person name="Ruebsam H."/>
            <person name="Jancsik S."/>
            <person name="Man Saint Yuen M."/>
            <person name="Madilao L.L."/>
            <person name="Bohlmann J."/>
        </authorList>
    </citation>
    <scope>NUCLEOTIDE SEQUENCE [MRNA]</scope>
    <scope>FUNCTION</scope>
    <scope>CATALYTIC ACTIVITY</scope>
    <scope>COFACTOR</scope>
    <scope>TISSUE SPECIFICITY</scope>
</reference>
<comment type="function">
    <text evidence="2">Catalyzes the formation of flavonols from dihydroflavonols (PubMed:31004005). Can act on dihydrokaempferol to produce kaempferol, on dihydroquercetin to produce quercitin and on dihydromyricetin to produce myricetin (PubMed:31004005).</text>
</comment>
<comment type="catalytic activity">
    <reaction evidence="2">
        <text>a (2R,3R)-dihydroflavonol + 2-oxoglutarate + O2 = a flavonol + succinate + CO2 + H2O</text>
        <dbReference type="Rhea" id="RHEA:21088"/>
        <dbReference type="ChEBI" id="CHEBI:15377"/>
        <dbReference type="ChEBI" id="CHEBI:15379"/>
        <dbReference type="ChEBI" id="CHEBI:16526"/>
        <dbReference type="ChEBI" id="CHEBI:16810"/>
        <dbReference type="ChEBI" id="CHEBI:28802"/>
        <dbReference type="ChEBI" id="CHEBI:30031"/>
        <dbReference type="ChEBI" id="CHEBI:138188"/>
        <dbReference type="EC" id="1.14.20.6"/>
    </reaction>
    <physiologicalReaction direction="left-to-right" evidence="2">
        <dbReference type="Rhea" id="RHEA:21089"/>
    </physiologicalReaction>
</comment>
<comment type="catalytic activity">
    <reaction evidence="2">
        <text>(2R,3R)-dihydrokaempferol + 2-oxoglutarate + O2 = kaempferol + succinate + CO2 + H2O + H(+)</text>
        <dbReference type="Rhea" id="RHEA:61132"/>
        <dbReference type="ChEBI" id="CHEBI:15377"/>
        <dbReference type="ChEBI" id="CHEBI:15378"/>
        <dbReference type="ChEBI" id="CHEBI:15379"/>
        <dbReference type="ChEBI" id="CHEBI:15401"/>
        <dbReference type="ChEBI" id="CHEBI:16526"/>
        <dbReference type="ChEBI" id="CHEBI:16810"/>
        <dbReference type="ChEBI" id="CHEBI:30031"/>
        <dbReference type="ChEBI" id="CHEBI:58573"/>
    </reaction>
    <physiologicalReaction direction="left-to-right" evidence="2">
        <dbReference type="Rhea" id="RHEA:61133"/>
    </physiologicalReaction>
</comment>
<comment type="catalytic activity">
    <reaction evidence="2">
        <text>(2R,3R)-dihydroquercetin + 2-oxoglutarate + O2 = quercetin + succinate + CO2 + H2O + H(+)</text>
        <dbReference type="Rhea" id="RHEA:61136"/>
        <dbReference type="ChEBI" id="CHEBI:15377"/>
        <dbReference type="ChEBI" id="CHEBI:15378"/>
        <dbReference type="ChEBI" id="CHEBI:15379"/>
        <dbReference type="ChEBI" id="CHEBI:16526"/>
        <dbReference type="ChEBI" id="CHEBI:16810"/>
        <dbReference type="ChEBI" id="CHEBI:17948"/>
        <dbReference type="ChEBI" id="CHEBI:30031"/>
        <dbReference type="ChEBI" id="CHEBI:57694"/>
    </reaction>
    <physiologicalReaction direction="left-to-right" evidence="2">
        <dbReference type="Rhea" id="RHEA:61137"/>
    </physiologicalReaction>
</comment>
<comment type="catalytic activity">
    <reaction evidence="2">
        <text>(2R,3R)-dihydromyricetin + 2-oxoglutarate + O2 = myricetin + succinate + CO2 + H2O + H(+)</text>
        <dbReference type="Rhea" id="RHEA:61140"/>
        <dbReference type="ChEBI" id="CHEBI:15377"/>
        <dbReference type="ChEBI" id="CHEBI:15378"/>
        <dbReference type="ChEBI" id="CHEBI:15379"/>
        <dbReference type="ChEBI" id="CHEBI:16526"/>
        <dbReference type="ChEBI" id="CHEBI:16810"/>
        <dbReference type="ChEBI" id="CHEBI:28429"/>
        <dbReference type="ChEBI" id="CHEBI:30031"/>
        <dbReference type="ChEBI" id="CHEBI:58395"/>
    </reaction>
    <physiologicalReaction direction="left-to-right" evidence="2">
        <dbReference type="Rhea" id="RHEA:61141"/>
    </physiologicalReaction>
</comment>
<comment type="cofactor">
    <cofactor evidence="5">
        <name>L-ascorbate</name>
        <dbReference type="ChEBI" id="CHEBI:38290"/>
    </cofactor>
    <text evidence="5">Binds 1 ascorbate molecule per subunit.</text>
</comment>
<comment type="cofactor">
    <cofactor evidence="1">
        <name>Fe(2+)</name>
        <dbReference type="ChEBI" id="CHEBI:29033"/>
    </cofactor>
    <text evidence="1">Binds 1 Fe(2+) ion per subunit.</text>
</comment>
<comment type="pathway">
    <text evidence="4">Flavonoid metabolism.</text>
</comment>
<comment type="tissue specificity">
    <text evidence="2">Expressed in young cromes.</text>
</comment>
<comment type="similarity">
    <text evidence="4">Belongs to the iron/ascorbate-dependent oxidoreductase family.</text>
</comment>
<evidence type="ECO:0000255" key="1">
    <source>
        <dbReference type="PROSITE-ProRule" id="PRU00805"/>
    </source>
</evidence>
<evidence type="ECO:0000269" key="2">
    <source>
    </source>
</evidence>
<evidence type="ECO:0000303" key="3">
    <source>
    </source>
</evidence>
<evidence type="ECO:0000305" key="4"/>
<evidence type="ECO:0000305" key="5">
    <source>
    </source>
</evidence>
<accession>A0A4D6Q440</accession>
<feature type="chain" id="PRO_0000448073" description="Flavonol synthase 1">
    <location>
        <begin position="1"/>
        <end position="331"/>
    </location>
</feature>
<feature type="domain" description="Fe2OG dioxygenase" evidence="1">
    <location>
        <begin position="191"/>
        <end position="292"/>
    </location>
</feature>
<feature type="binding site" evidence="1">
    <location>
        <position position="217"/>
    </location>
    <ligand>
        <name>Fe cation</name>
        <dbReference type="ChEBI" id="CHEBI:24875"/>
    </ligand>
</feature>
<feature type="binding site" evidence="1">
    <location>
        <position position="219"/>
    </location>
    <ligand>
        <name>Fe cation</name>
        <dbReference type="ChEBI" id="CHEBI:24875"/>
    </ligand>
</feature>
<feature type="binding site" evidence="1">
    <location>
        <position position="273"/>
    </location>
    <ligand>
        <name>Fe cation</name>
        <dbReference type="ChEBI" id="CHEBI:24875"/>
    </ligand>
</feature>
<feature type="binding site" evidence="1">
    <location>
        <position position="283"/>
    </location>
    <ligand>
        <name>2-oxoglutarate</name>
        <dbReference type="ChEBI" id="CHEBI:16810"/>
    </ligand>
</feature>
<gene>
    <name evidence="3" type="primary">FLS1</name>
    <name evidence="3" type="synonym">FLS</name>
</gene>
<name>FLS1_CROXC</name>
<organism>
    <name type="scientific">Crocosmia x crocosmiiflora</name>
    <name type="common">Montbretia</name>
    <name type="synonym">Crocosmia aurea x Crocosmia pottsii</name>
    <dbReference type="NCBI Taxonomy" id="1053288"/>
    <lineage>
        <taxon>Eukaryota</taxon>
        <taxon>Viridiplantae</taxon>
        <taxon>Streptophyta</taxon>
        <taxon>Embryophyta</taxon>
        <taxon>Tracheophyta</taxon>
        <taxon>Spermatophyta</taxon>
        <taxon>Magnoliopsida</taxon>
        <taxon>Liliopsida</taxon>
        <taxon>Asparagales</taxon>
        <taxon>Iridaceae</taxon>
        <taxon>Crocoideae</taxon>
        <taxon>Freesieae</taxon>
        <taxon>Crocosmia</taxon>
    </lineage>
</organism>
<proteinExistence type="evidence at protein level"/>
<sequence>MEVERVQAIASLGQKLDTIPSEFIRSEHEQPGKTTFDGPIPEIPVIDLGDKDGIVGAVAEAAREWGLFQIINHGIPVEVIKELQRVGKEFFELPQEEKEVYAMDMVTMEGYGTKLQKETEGKKAWVDHLFHNIWPESRINYNFWPQNPPDYRKANKEYAKHLLEVMGEILTSLSLGLGLEGHVFKEALGGDAIELLLKINYYPTCPRPDLALGVPAHTDMSAITLLVPNEVPGLQVFKDDHWFDAKYIPNAIIVHIGDQIEILSNGKYKSVLHRTTVNKEKVRMSWPVFCSPPGEWMVGTLPQLVSEDTPAKYKTKKYKDYQYCKLNKLPQ</sequence>